<proteinExistence type="inferred from homology"/>
<keyword id="KW-0066">ATP synthesis</keyword>
<keyword id="KW-0997">Cell inner membrane</keyword>
<keyword id="KW-1003">Cell membrane</keyword>
<keyword id="KW-0138">CF(0)</keyword>
<keyword id="KW-0375">Hydrogen ion transport</keyword>
<keyword id="KW-0406">Ion transport</keyword>
<keyword id="KW-0472">Membrane</keyword>
<keyword id="KW-1185">Reference proteome</keyword>
<keyword id="KW-0812">Transmembrane</keyword>
<keyword id="KW-1133">Transmembrane helix</keyword>
<keyword id="KW-0813">Transport</keyword>
<name>ATP6_BLOFL</name>
<feature type="chain" id="PRO_0000362246" description="ATP synthase subunit a">
    <location>
        <begin position="1"/>
        <end position="272"/>
    </location>
</feature>
<feature type="transmembrane region" description="Helical" evidence="1">
    <location>
        <begin position="42"/>
        <end position="62"/>
    </location>
</feature>
<feature type="transmembrane region" description="Helical" evidence="1">
    <location>
        <begin position="108"/>
        <end position="128"/>
    </location>
</feature>
<feature type="transmembrane region" description="Helical" evidence="1">
    <location>
        <begin position="140"/>
        <end position="162"/>
    </location>
</feature>
<feature type="transmembrane region" description="Helical" evidence="1">
    <location>
        <begin position="177"/>
        <end position="197"/>
    </location>
</feature>
<feature type="transmembrane region" description="Helical" evidence="1">
    <location>
        <begin position="219"/>
        <end position="239"/>
    </location>
</feature>
<feature type="transmembrane region" description="Helical" evidence="1">
    <location>
        <begin position="241"/>
        <end position="261"/>
    </location>
</feature>
<gene>
    <name evidence="1" type="primary">atpB</name>
    <name type="ordered locus">Bfl002</name>
</gene>
<sequence length="272" mass="31058">MLSTKSVTQKYIEHHLSNLQFDLKNLTLVQSHENMSFWVLNIDSLFFSVLLCLLFLVIAGFVAKYSTVSVPGKLQAFVELIISFVDGCVKDMFHGTSKLISPLSMTVFVWIILMNSMDLIPIDLLPCIADYFFGIPTLRILPSADINITCAMALNIFALMIFYYIKTNGIIGFVSSLIYHPFNYSLCIPINFLLEIISLCSKPVSLSLRLFGNMYSGELIFILIAGFLPWWSQWMLSVPWAIFHILIIILQAFIFMVLTIIYLSESHYEYKP</sequence>
<organism>
    <name type="scientific">Blochmanniella floridana</name>
    <dbReference type="NCBI Taxonomy" id="203907"/>
    <lineage>
        <taxon>Bacteria</taxon>
        <taxon>Pseudomonadati</taxon>
        <taxon>Pseudomonadota</taxon>
        <taxon>Gammaproteobacteria</taxon>
        <taxon>Enterobacterales</taxon>
        <taxon>Enterobacteriaceae</taxon>
        <taxon>ant endosymbionts</taxon>
        <taxon>Candidatus Blochmanniella</taxon>
    </lineage>
</organism>
<dbReference type="EMBL" id="BX248583">
    <property type="protein sequence ID" value="CAD83530.1"/>
    <property type="molecule type" value="Genomic_DNA"/>
</dbReference>
<dbReference type="SMR" id="Q7VQW2"/>
<dbReference type="STRING" id="203907.Bfl002"/>
<dbReference type="KEGG" id="bfl:Bfl002"/>
<dbReference type="eggNOG" id="COG0356">
    <property type="taxonomic scope" value="Bacteria"/>
</dbReference>
<dbReference type="HOGENOM" id="CLU_041018_1_0_6"/>
<dbReference type="OrthoDB" id="9789241at2"/>
<dbReference type="Proteomes" id="UP000002192">
    <property type="component" value="Chromosome"/>
</dbReference>
<dbReference type="GO" id="GO:0005886">
    <property type="term" value="C:plasma membrane"/>
    <property type="evidence" value="ECO:0007669"/>
    <property type="project" value="UniProtKB-SubCell"/>
</dbReference>
<dbReference type="GO" id="GO:0045259">
    <property type="term" value="C:proton-transporting ATP synthase complex"/>
    <property type="evidence" value="ECO:0007669"/>
    <property type="project" value="UniProtKB-KW"/>
</dbReference>
<dbReference type="GO" id="GO:0046933">
    <property type="term" value="F:proton-transporting ATP synthase activity, rotational mechanism"/>
    <property type="evidence" value="ECO:0007669"/>
    <property type="project" value="UniProtKB-UniRule"/>
</dbReference>
<dbReference type="GO" id="GO:0042777">
    <property type="term" value="P:proton motive force-driven plasma membrane ATP synthesis"/>
    <property type="evidence" value="ECO:0007669"/>
    <property type="project" value="TreeGrafter"/>
</dbReference>
<dbReference type="CDD" id="cd00310">
    <property type="entry name" value="ATP-synt_Fo_a_6"/>
    <property type="match status" value="1"/>
</dbReference>
<dbReference type="FunFam" id="1.20.120.220:FF:000002">
    <property type="entry name" value="ATP synthase subunit a"/>
    <property type="match status" value="1"/>
</dbReference>
<dbReference type="Gene3D" id="1.20.120.220">
    <property type="entry name" value="ATP synthase, F0 complex, subunit A"/>
    <property type="match status" value="1"/>
</dbReference>
<dbReference type="HAMAP" id="MF_01393">
    <property type="entry name" value="ATP_synth_a_bact"/>
    <property type="match status" value="1"/>
</dbReference>
<dbReference type="InterPro" id="IPR045082">
    <property type="entry name" value="ATP_syn_F0_a_bact/chloroplast"/>
</dbReference>
<dbReference type="InterPro" id="IPR000568">
    <property type="entry name" value="ATP_synth_F0_asu"/>
</dbReference>
<dbReference type="InterPro" id="IPR023011">
    <property type="entry name" value="ATP_synth_F0_asu_AS"/>
</dbReference>
<dbReference type="InterPro" id="IPR035908">
    <property type="entry name" value="F0_ATP_A_sf"/>
</dbReference>
<dbReference type="NCBIfam" id="TIGR01131">
    <property type="entry name" value="ATP_synt_6_or_A"/>
    <property type="match status" value="1"/>
</dbReference>
<dbReference type="NCBIfam" id="NF004477">
    <property type="entry name" value="PRK05815.1-1"/>
    <property type="match status" value="1"/>
</dbReference>
<dbReference type="PANTHER" id="PTHR42823">
    <property type="entry name" value="ATP SYNTHASE SUBUNIT A, CHLOROPLASTIC"/>
    <property type="match status" value="1"/>
</dbReference>
<dbReference type="PANTHER" id="PTHR42823:SF3">
    <property type="entry name" value="ATP SYNTHASE SUBUNIT A, CHLOROPLASTIC"/>
    <property type="match status" value="1"/>
</dbReference>
<dbReference type="Pfam" id="PF00119">
    <property type="entry name" value="ATP-synt_A"/>
    <property type="match status" value="1"/>
</dbReference>
<dbReference type="PRINTS" id="PR00123">
    <property type="entry name" value="ATPASEA"/>
</dbReference>
<dbReference type="SUPFAM" id="SSF81336">
    <property type="entry name" value="F1F0 ATP synthase subunit A"/>
    <property type="match status" value="1"/>
</dbReference>
<dbReference type="PROSITE" id="PS00449">
    <property type="entry name" value="ATPASE_A"/>
    <property type="match status" value="1"/>
</dbReference>
<accession>Q7VQW2</accession>
<comment type="function">
    <text evidence="1">Key component of the proton channel; it plays a direct role in the translocation of protons across the membrane.</text>
</comment>
<comment type="subunit">
    <text evidence="1">F-type ATPases have 2 components, CF(1) - the catalytic core - and CF(0) - the membrane proton channel. CF(1) has five subunits: alpha(3), beta(3), gamma(1), delta(1), epsilon(1). CF(0) has three main subunits: a(1), b(2) and c(9-12). The alpha and beta chains form an alternating ring which encloses part of the gamma chain. CF(1) is attached to CF(0) by a central stalk formed by the gamma and epsilon chains, while a peripheral stalk is formed by the delta and b chains.</text>
</comment>
<comment type="subcellular location">
    <subcellularLocation>
        <location evidence="1">Cell inner membrane</location>
        <topology evidence="1">Multi-pass membrane protein</topology>
    </subcellularLocation>
</comment>
<comment type="similarity">
    <text evidence="1">Belongs to the ATPase A chain family.</text>
</comment>
<reference key="1">
    <citation type="journal article" date="2003" name="Proc. Natl. Acad. Sci. U.S.A.">
        <title>The genome sequence of Blochmannia floridanus: comparative analysis of reduced genomes.</title>
        <authorList>
            <person name="Gil R."/>
            <person name="Silva F.J."/>
            <person name="Zientz E."/>
            <person name="Delmotte F."/>
            <person name="Gonzalez-Candelas F."/>
            <person name="Latorre A."/>
            <person name="Rausell C."/>
            <person name="Kamerbeek J."/>
            <person name="Gadau J."/>
            <person name="Hoelldobler B."/>
            <person name="van Ham R.C.H.J."/>
            <person name="Gross R."/>
            <person name="Moya A."/>
        </authorList>
    </citation>
    <scope>NUCLEOTIDE SEQUENCE [LARGE SCALE GENOMIC DNA]</scope>
</reference>
<evidence type="ECO:0000255" key="1">
    <source>
        <dbReference type="HAMAP-Rule" id="MF_01393"/>
    </source>
</evidence>
<protein>
    <recommendedName>
        <fullName evidence="1">ATP synthase subunit a</fullName>
    </recommendedName>
    <alternativeName>
        <fullName evidence="1">ATP synthase F0 sector subunit a</fullName>
    </alternativeName>
    <alternativeName>
        <fullName evidence="1">F-ATPase subunit 6</fullName>
    </alternativeName>
</protein>